<accession>Q6G1M0</accession>
<organism>
    <name type="scientific">Bartonella henselae (strain ATCC 49882 / DSM 28221 / CCUG 30454 / Houston 1)</name>
    <name type="common">Rochalimaea henselae</name>
    <dbReference type="NCBI Taxonomy" id="283166"/>
    <lineage>
        <taxon>Bacteria</taxon>
        <taxon>Pseudomonadati</taxon>
        <taxon>Pseudomonadota</taxon>
        <taxon>Alphaproteobacteria</taxon>
        <taxon>Hyphomicrobiales</taxon>
        <taxon>Bartonellaceae</taxon>
        <taxon>Bartonella</taxon>
    </lineage>
</organism>
<proteinExistence type="inferred from homology"/>
<dbReference type="EC" id="1.1.1.37" evidence="1"/>
<dbReference type="EMBL" id="BX897699">
    <property type="protein sequence ID" value="CAF28418.1"/>
    <property type="molecule type" value="Genomic_DNA"/>
</dbReference>
<dbReference type="RefSeq" id="WP_011181417.1">
    <property type="nucleotide sequence ID" value="NZ_LRIJ02000001.1"/>
</dbReference>
<dbReference type="SMR" id="Q6G1M0"/>
<dbReference type="PaxDb" id="283166-BH16570"/>
<dbReference type="EnsemblBacteria" id="CAF28418">
    <property type="protein sequence ID" value="CAF28418"/>
    <property type="gene ID" value="BH16570"/>
</dbReference>
<dbReference type="GeneID" id="92986276"/>
<dbReference type="KEGG" id="bhe:BH16570"/>
<dbReference type="eggNOG" id="COG0039">
    <property type="taxonomic scope" value="Bacteria"/>
</dbReference>
<dbReference type="OrthoDB" id="9802969at2"/>
<dbReference type="Proteomes" id="UP000000421">
    <property type="component" value="Chromosome"/>
</dbReference>
<dbReference type="GO" id="GO:0004459">
    <property type="term" value="F:L-lactate dehydrogenase activity"/>
    <property type="evidence" value="ECO:0007669"/>
    <property type="project" value="TreeGrafter"/>
</dbReference>
<dbReference type="GO" id="GO:0030060">
    <property type="term" value="F:L-malate dehydrogenase (NAD+) activity"/>
    <property type="evidence" value="ECO:0007669"/>
    <property type="project" value="UniProtKB-UniRule"/>
</dbReference>
<dbReference type="GO" id="GO:0006089">
    <property type="term" value="P:lactate metabolic process"/>
    <property type="evidence" value="ECO:0007669"/>
    <property type="project" value="TreeGrafter"/>
</dbReference>
<dbReference type="GO" id="GO:0006099">
    <property type="term" value="P:tricarboxylic acid cycle"/>
    <property type="evidence" value="ECO:0007669"/>
    <property type="project" value="UniProtKB-UniRule"/>
</dbReference>
<dbReference type="CDD" id="cd01339">
    <property type="entry name" value="LDH-like_MDH"/>
    <property type="match status" value="1"/>
</dbReference>
<dbReference type="FunFam" id="3.40.50.720:FF:000018">
    <property type="entry name" value="Malate dehydrogenase"/>
    <property type="match status" value="1"/>
</dbReference>
<dbReference type="FunFam" id="3.90.110.10:FF:000004">
    <property type="entry name" value="Malate dehydrogenase"/>
    <property type="match status" value="1"/>
</dbReference>
<dbReference type="Gene3D" id="3.90.110.10">
    <property type="entry name" value="Lactate dehydrogenase/glycoside hydrolase, family 4, C-terminal"/>
    <property type="match status" value="1"/>
</dbReference>
<dbReference type="Gene3D" id="3.40.50.720">
    <property type="entry name" value="NAD(P)-binding Rossmann-like Domain"/>
    <property type="match status" value="1"/>
</dbReference>
<dbReference type="HAMAP" id="MF_00487">
    <property type="entry name" value="Malate_dehydrog_3"/>
    <property type="match status" value="1"/>
</dbReference>
<dbReference type="InterPro" id="IPR001557">
    <property type="entry name" value="L-lactate/malate_DH"/>
</dbReference>
<dbReference type="InterPro" id="IPR022383">
    <property type="entry name" value="Lactate/malate_DH_C"/>
</dbReference>
<dbReference type="InterPro" id="IPR001236">
    <property type="entry name" value="Lactate/malate_DH_N"/>
</dbReference>
<dbReference type="InterPro" id="IPR015955">
    <property type="entry name" value="Lactate_DH/Glyco_Ohase_4_C"/>
</dbReference>
<dbReference type="InterPro" id="IPR011275">
    <property type="entry name" value="Malate_DH_type3"/>
</dbReference>
<dbReference type="InterPro" id="IPR036291">
    <property type="entry name" value="NAD(P)-bd_dom_sf"/>
</dbReference>
<dbReference type="NCBIfam" id="TIGR01763">
    <property type="entry name" value="MalateDH_bact"/>
    <property type="match status" value="1"/>
</dbReference>
<dbReference type="NCBIfam" id="NF004863">
    <property type="entry name" value="PRK06223.1"/>
    <property type="match status" value="1"/>
</dbReference>
<dbReference type="PANTHER" id="PTHR43128">
    <property type="entry name" value="L-2-HYDROXYCARBOXYLATE DEHYDROGENASE (NAD(P)(+))"/>
    <property type="match status" value="1"/>
</dbReference>
<dbReference type="PANTHER" id="PTHR43128:SF16">
    <property type="entry name" value="L-LACTATE DEHYDROGENASE"/>
    <property type="match status" value="1"/>
</dbReference>
<dbReference type="Pfam" id="PF02866">
    <property type="entry name" value="Ldh_1_C"/>
    <property type="match status" value="1"/>
</dbReference>
<dbReference type="Pfam" id="PF00056">
    <property type="entry name" value="Ldh_1_N"/>
    <property type="match status" value="1"/>
</dbReference>
<dbReference type="PIRSF" id="PIRSF000102">
    <property type="entry name" value="Lac_mal_DH"/>
    <property type="match status" value="1"/>
</dbReference>
<dbReference type="PRINTS" id="PR00086">
    <property type="entry name" value="LLDHDRGNASE"/>
</dbReference>
<dbReference type="SUPFAM" id="SSF56327">
    <property type="entry name" value="LDH C-terminal domain-like"/>
    <property type="match status" value="1"/>
</dbReference>
<dbReference type="SUPFAM" id="SSF51735">
    <property type="entry name" value="NAD(P)-binding Rossmann-fold domains"/>
    <property type="match status" value="1"/>
</dbReference>
<keyword id="KW-0520">NAD</keyword>
<keyword id="KW-0560">Oxidoreductase</keyword>
<keyword id="KW-0816">Tricarboxylic acid cycle</keyword>
<feature type="chain" id="PRO_0000113437" description="Malate dehydrogenase">
    <location>
        <begin position="1"/>
        <end position="320"/>
    </location>
</feature>
<feature type="active site" description="Proton acceptor" evidence="1">
    <location>
        <position position="176"/>
    </location>
</feature>
<feature type="binding site" evidence="1">
    <location>
        <begin position="10"/>
        <end position="15"/>
    </location>
    <ligand>
        <name>NAD(+)</name>
        <dbReference type="ChEBI" id="CHEBI:57540"/>
    </ligand>
</feature>
<feature type="binding site" evidence="1">
    <location>
        <position position="34"/>
    </location>
    <ligand>
        <name>NAD(+)</name>
        <dbReference type="ChEBI" id="CHEBI:57540"/>
    </ligand>
</feature>
<feature type="binding site" evidence="1">
    <location>
        <position position="83"/>
    </location>
    <ligand>
        <name>substrate</name>
    </ligand>
</feature>
<feature type="binding site" evidence="1">
    <location>
        <position position="89"/>
    </location>
    <ligand>
        <name>substrate</name>
    </ligand>
</feature>
<feature type="binding site" evidence="1">
    <location>
        <position position="96"/>
    </location>
    <ligand>
        <name>NAD(+)</name>
        <dbReference type="ChEBI" id="CHEBI:57540"/>
    </ligand>
</feature>
<feature type="binding site" evidence="1">
    <location>
        <begin position="119"/>
        <end position="121"/>
    </location>
    <ligand>
        <name>NAD(+)</name>
        <dbReference type="ChEBI" id="CHEBI:57540"/>
    </ligand>
</feature>
<feature type="binding site" evidence="1">
    <location>
        <position position="121"/>
    </location>
    <ligand>
        <name>substrate</name>
    </ligand>
</feature>
<feature type="binding site" evidence="1">
    <location>
        <position position="152"/>
    </location>
    <ligand>
        <name>substrate</name>
    </ligand>
</feature>
<reference key="1">
    <citation type="journal article" date="2004" name="Proc. Natl. Acad. Sci. U.S.A.">
        <title>The louse-borne human pathogen Bartonella quintana is a genomic derivative of the zoonotic agent Bartonella henselae.</title>
        <authorList>
            <person name="Alsmark U.C.M."/>
            <person name="Frank A.C."/>
            <person name="Karlberg E.O."/>
            <person name="Legault B.-A."/>
            <person name="Ardell D.H."/>
            <person name="Canbaeck B."/>
            <person name="Eriksson A.-S."/>
            <person name="Naeslund A.K."/>
            <person name="Handley S.A."/>
            <person name="Huvet M."/>
            <person name="La Scola B."/>
            <person name="Holmberg M."/>
            <person name="Andersson S.G.E."/>
        </authorList>
    </citation>
    <scope>NUCLEOTIDE SEQUENCE [LARGE SCALE GENOMIC DNA]</scope>
    <source>
        <strain>ATCC 49882 / DSM 28221 / CCUG 30454 / Houston 1</strain>
    </source>
</reference>
<sequence>MARKKIALIGSGMIGGTLAHIIGLKELGDVVLFDIAEGIPQGKALDIAESSPVDGFDVSLTGANSYDVIEGADVVIVTAGVARKPGMSRDDLLGINLKVMEQVGAGIKKYASSAFVICITNPLDAMVWALQKFSGLPTQKVVGMAGILDSARFRHFLSEEFKISVKDVTAFVLGGHGDSMVPLVRYSTVGGISLPDLVKMGWTTQEKIDQIIQRTRDGGAEIVSLLKTGSAFYAPAASAVSMAEAYLKDTKRVVPVAAYLSGQYGVKDTYVGVPVVIGAGGVERVIEIDLDKEEKAAFEKSVSAVQKLCEACIAVAPGLK</sequence>
<gene>
    <name evidence="1" type="primary">mdh</name>
    <name type="ordered locus">BH16570</name>
</gene>
<protein>
    <recommendedName>
        <fullName evidence="1">Malate dehydrogenase</fullName>
        <ecNumber evidence="1">1.1.1.37</ecNumber>
    </recommendedName>
</protein>
<comment type="function">
    <text evidence="1">Catalyzes the reversible oxidation of malate to oxaloacetate.</text>
</comment>
<comment type="catalytic activity">
    <reaction evidence="1">
        <text>(S)-malate + NAD(+) = oxaloacetate + NADH + H(+)</text>
        <dbReference type="Rhea" id="RHEA:21432"/>
        <dbReference type="ChEBI" id="CHEBI:15378"/>
        <dbReference type="ChEBI" id="CHEBI:15589"/>
        <dbReference type="ChEBI" id="CHEBI:16452"/>
        <dbReference type="ChEBI" id="CHEBI:57540"/>
        <dbReference type="ChEBI" id="CHEBI:57945"/>
        <dbReference type="EC" id="1.1.1.37"/>
    </reaction>
</comment>
<comment type="similarity">
    <text evidence="1">Belongs to the LDH/MDH superfamily. MDH type 3 family.</text>
</comment>
<evidence type="ECO:0000255" key="1">
    <source>
        <dbReference type="HAMAP-Rule" id="MF_00487"/>
    </source>
</evidence>
<name>MDH_BARHE</name>